<protein>
    <recommendedName>
        <fullName>Leucine aminopeptidase A</fullName>
        <ecNumber>3.4.11.-</ecNumber>
    </recommendedName>
    <alternativeName>
        <fullName>Leucyl aminopeptidase A</fullName>
        <shortName>LAPA</shortName>
    </alternativeName>
</protein>
<reference key="1">
    <citation type="journal article" date="2005" name="Nature">
        <title>Genome sequencing and analysis of Aspergillus oryzae.</title>
        <authorList>
            <person name="Machida M."/>
            <person name="Asai K."/>
            <person name="Sano M."/>
            <person name="Tanaka T."/>
            <person name="Kumagai T."/>
            <person name="Terai G."/>
            <person name="Kusumoto K."/>
            <person name="Arima T."/>
            <person name="Akita O."/>
            <person name="Kashiwagi Y."/>
            <person name="Abe K."/>
            <person name="Gomi K."/>
            <person name="Horiuchi H."/>
            <person name="Kitamoto K."/>
            <person name="Kobayashi T."/>
            <person name="Takeuchi M."/>
            <person name="Denning D.W."/>
            <person name="Galagan J.E."/>
            <person name="Nierman W.C."/>
            <person name="Yu J."/>
            <person name="Archer D.B."/>
            <person name="Bennett J.W."/>
            <person name="Bhatnagar D."/>
            <person name="Cleveland T.E."/>
            <person name="Fedorova N.D."/>
            <person name="Gotoh O."/>
            <person name="Horikawa H."/>
            <person name="Hosoyama A."/>
            <person name="Ichinomiya M."/>
            <person name="Igarashi R."/>
            <person name="Iwashita K."/>
            <person name="Juvvadi P.R."/>
            <person name="Kato M."/>
            <person name="Kato Y."/>
            <person name="Kin T."/>
            <person name="Kokubun A."/>
            <person name="Maeda H."/>
            <person name="Maeyama N."/>
            <person name="Maruyama J."/>
            <person name="Nagasaki H."/>
            <person name="Nakajima T."/>
            <person name="Oda K."/>
            <person name="Okada K."/>
            <person name="Paulsen I."/>
            <person name="Sakamoto K."/>
            <person name="Sawano T."/>
            <person name="Takahashi M."/>
            <person name="Takase K."/>
            <person name="Terabayashi Y."/>
            <person name="Wortman J.R."/>
            <person name="Yamada O."/>
            <person name="Yamagata Y."/>
            <person name="Anazawa H."/>
            <person name="Hata Y."/>
            <person name="Koide Y."/>
            <person name="Komori T."/>
            <person name="Koyama Y."/>
            <person name="Minetoki T."/>
            <person name="Suharnan S."/>
            <person name="Tanaka A."/>
            <person name="Isono K."/>
            <person name="Kuhara S."/>
            <person name="Ogasawara N."/>
            <person name="Kikuchi H."/>
        </authorList>
    </citation>
    <scope>NUCLEOTIDE SEQUENCE [LARGE SCALE GENOMIC DNA]</scope>
    <source>
        <strain>ATCC 42149 / RIB 40</strain>
    </source>
</reference>
<reference key="2">
    <citation type="journal article" date="2011" name="Curr. Microbiol.">
        <title>Overexpression and characterization of an extracellular leucine aminopeptidase from Aspergillus oryzae.</title>
        <authorList>
            <person name="Matsushita-Morita M."/>
            <person name="Tada S."/>
            <person name="Suzuki S."/>
            <person name="Hattori R."/>
            <person name="Marui J."/>
            <person name="Furukawa I."/>
            <person name="Yamagata Y."/>
            <person name="Amano H."/>
            <person name="Ishida H."/>
            <person name="Takeuchi M."/>
            <person name="Kashiwagi Y."/>
            <person name="Kusumoto K."/>
        </authorList>
    </citation>
    <scope>PROTEIN SEQUENCE OF 80-86</scope>
    <scope>INDUCTION</scope>
    <scope>FUNCTION</scope>
    <scope>BIOPHYSICOCHEMICAL PROPERTIES</scope>
    <scope>SUBCELLULAR LOCATION</scope>
    <scope>ACTIVITY REGULATION</scope>
</reference>
<reference key="3">
    <citation type="journal article" date="2009" name="Biosci. Biotechnol. Biochem.">
        <title>Analysis of extracellular proteins of Aspergillus oryzae grown on soy sauce koji.</title>
        <authorList>
            <person name="Liang Y."/>
            <person name="Pan L."/>
            <person name="Lin Y."/>
        </authorList>
    </citation>
    <scope>IDENTIFICATION BY MASS SPECTROMETRY</scope>
    <scope>SUBCELLULAR LOCATION</scope>
</reference>
<accession>Q2U1F3</accession>
<comment type="function">
    <text evidence="4">Extracellular aminopeptidase that allows assimilation of proteinaceous substrates.</text>
</comment>
<comment type="cofactor">
    <cofactor evidence="1">
        <name>Zn(2+)</name>
        <dbReference type="ChEBI" id="CHEBI:29105"/>
    </cofactor>
    <text evidence="1">Binds 2 Zn(2+) ions per subunit.</text>
</comment>
<comment type="activity regulation">
    <text evidence="4">Calcium, magnesium and manganese cations reduce peptidase activity to 20.3-51.3 percent. The metal ion chelating reagent EDTA almost completely inhibits activity. The protease inhibitor bacitracin and the aminopeptidase B inhibitor bestatin, as well as DTT and beta-mercaptoethanol act also as lap A inhibitorsD.</text>
</comment>
<comment type="biophysicochemical properties">
    <kinetics>
        <KM evidence="4">0.244 mM for Leu-p-nitroaniline</KM>
        <KM evidence="4">0.782 mM for Phe-p-nitroaniline</KM>
    </kinetics>
    <phDependence>
        <text evidence="4">Optimum pH is 8.5.</text>
    </phDependence>
    <temperatureDependence>
        <text evidence="4">Optimum temperature is 60 degrees Celsius.</text>
    </temperatureDependence>
</comment>
<comment type="subunit">
    <text evidence="1">Monomer.</text>
</comment>
<comment type="subcellular location">
    <subcellularLocation>
        <location evidence="3 4">Secreted</location>
    </subcellularLocation>
</comment>
<comment type="induction">
    <text evidence="4">Expressed at higher level at alkaline conditions. May be under the control of pacC, the transcription factor that regulates pH-conditional gene expression. Expression is very low under normal condition, salt condition and heat-stress condition.</text>
</comment>
<comment type="similarity">
    <text evidence="5">Belongs to the peptidase M28 family. M28E subfamily.</text>
</comment>
<evidence type="ECO:0000250" key="1"/>
<evidence type="ECO:0000255" key="2"/>
<evidence type="ECO:0000269" key="3">
    <source>
    </source>
</evidence>
<evidence type="ECO:0000269" key="4">
    <source>
    </source>
</evidence>
<evidence type="ECO:0000305" key="5"/>
<evidence type="ECO:0007829" key="6">
    <source>
        <dbReference type="PDB" id="6ZEP"/>
    </source>
</evidence>
<evidence type="ECO:0007829" key="7">
    <source>
        <dbReference type="PDB" id="6ZEQ"/>
    </source>
</evidence>
<gene>
    <name type="primary">lapA</name>
    <name type="ORF">AO090011000052</name>
</gene>
<name>LAPA_ASPOR</name>
<dbReference type="EC" id="3.4.11.-"/>
<dbReference type="EMBL" id="BA000055">
    <property type="protein sequence ID" value="BAE64612.1"/>
    <property type="molecule type" value="Genomic_DNA"/>
</dbReference>
<dbReference type="RefSeq" id="XP_001825745.1">
    <property type="nucleotide sequence ID" value="XM_001825693.1"/>
</dbReference>
<dbReference type="PDB" id="6ZEP">
    <property type="method" value="X-ray"/>
    <property type="resolution" value="1.61 A"/>
    <property type="chains" value="A=1-377"/>
</dbReference>
<dbReference type="PDB" id="6ZEQ">
    <property type="method" value="X-ray"/>
    <property type="resolution" value="1.97 A"/>
    <property type="chains" value="A=1-377"/>
</dbReference>
<dbReference type="PDB" id="7OEZ">
    <property type="method" value="X-ray"/>
    <property type="resolution" value="2.48 A"/>
    <property type="chains" value="A=77-377"/>
</dbReference>
<dbReference type="PDBsum" id="6ZEP"/>
<dbReference type="PDBsum" id="6ZEQ"/>
<dbReference type="PDBsum" id="7OEZ"/>
<dbReference type="SMR" id="Q2U1F3"/>
<dbReference type="STRING" id="510516.Q2U1F3"/>
<dbReference type="MEROPS" id="M28.022"/>
<dbReference type="GlyCosmos" id="Q2U1F3">
    <property type="glycosylation" value="2 sites, No reported glycans"/>
</dbReference>
<dbReference type="EnsemblFungi" id="BAE64612">
    <property type="protein sequence ID" value="BAE64612"/>
    <property type="gene ID" value="AO090011000052"/>
</dbReference>
<dbReference type="GeneID" id="5997848"/>
<dbReference type="KEGG" id="aor:AO090011000052"/>
<dbReference type="VEuPathDB" id="FungiDB:AO090011000052"/>
<dbReference type="HOGENOM" id="CLU_025866_0_0_1"/>
<dbReference type="OMA" id="QPFSEFH"/>
<dbReference type="OrthoDB" id="48123at5052"/>
<dbReference type="Proteomes" id="UP000006564">
    <property type="component" value="Chromosome 7"/>
</dbReference>
<dbReference type="GO" id="GO:0005576">
    <property type="term" value="C:extracellular region"/>
    <property type="evidence" value="ECO:0000314"/>
    <property type="project" value="UniProtKB"/>
</dbReference>
<dbReference type="GO" id="GO:0004177">
    <property type="term" value="F:aminopeptidase activity"/>
    <property type="evidence" value="ECO:0000314"/>
    <property type="project" value="UniProtKB"/>
</dbReference>
<dbReference type="GO" id="GO:0046872">
    <property type="term" value="F:metal ion binding"/>
    <property type="evidence" value="ECO:0007669"/>
    <property type="project" value="UniProtKB-KW"/>
</dbReference>
<dbReference type="GO" id="GO:0008235">
    <property type="term" value="F:metalloexopeptidase activity"/>
    <property type="evidence" value="ECO:0007669"/>
    <property type="project" value="InterPro"/>
</dbReference>
<dbReference type="GO" id="GO:0006508">
    <property type="term" value="P:proteolysis"/>
    <property type="evidence" value="ECO:0000314"/>
    <property type="project" value="AspGD"/>
</dbReference>
<dbReference type="CDD" id="cd03879">
    <property type="entry name" value="M28_AAP"/>
    <property type="match status" value="1"/>
</dbReference>
<dbReference type="FunFam" id="3.40.630.10:FF:000042">
    <property type="entry name" value="Peptide hydrolase"/>
    <property type="match status" value="1"/>
</dbReference>
<dbReference type="Gene3D" id="3.40.630.10">
    <property type="entry name" value="Zn peptidases"/>
    <property type="match status" value="1"/>
</dbReference>
<dbReference type="InterPro" id="IPR045175">
    <property type="entry name" value="M28_fam"/>
</dbReference>
<dbReference type="InterPro" id="IPR007484">
    <property type="entry name" value="Peptidase_M28"/>
</dbReference>
<dbReference type="PANTHER" id="PTHR12147:SF56">
    <property type="entry name" value="AMINOPEPTIDASE YDR415C-RELATED"/>
    <property type="match status" value="1"/>
</dbReference>
<dbReference type="PANTHER" id="PTHR12147">
    <property type="entry name" value="METALLOPEPTIDASE M28 FAMILY MEMBER"/>
    <property type="match status" value="1"/>
</dbReference>
<dbReference type="Pfam" id="PF04389">
    <property type="entry name" value="Peptidase_M28"/>
    <property type="match status" value="1"/>
</dbReference>
<dbReference type="SUPFAM" id="SSF53187">
    <property type="entry name" value="Zn-dependent exopeptidases"/>
    <property type="match status" value="1"/>
</dbReference>
<proteinExistence type="evidence at protein level"/>
<keyword id="KW-0002">3D-structure</keyword>
<keyword id="KW-0031">Aminopeptidase</keyword>
<keyword id="KW-0903">Direct protein sequencing</keyword>
<keyword id="KW-1015">Disulfide bond</keyword>
<keyword id="KW-0325">Glycoprotein</keyword>
<keyword id="KW-0378">Hydrolase</keyword>
<keyword id="KW-0479">Metal-binding</keyword>
<keyword id="KW-0645">Protease</keyword>
<keyword id="KW-1185">Reference proteome</keyword>
<keyword id="KW-0964">Secreted</keyword>
<keyword id="KW-0732">Signal</keyword>
<keyword id="KW-0862">Zinc</keyword>
<keyword id="KW-0865">Zymogen</keyword>
<feature type="signal peptide" evidence="2">
    <location>
        <begin position="1"/>
        <end position="18"/>
    </location>
</feature>
<feature type="propeptide" id="PRO_0000412395" evidence="4">
    <location>
        <begin position="19"/>
        <end position="79"/>
    </location>
</feature>
<feature type="chain" id="PRO_0000412396" description="Leucine aminopeptidase A">
    <location>
        <begin position="80"/>
        <end position="377"/>
    </location>
</feature>
<feature type="binding site" evidence="1">
    <location>
        <position position="176"/>
    </location>
    <ligand>
        <name>Zn(2+)</name>
        <dbReference type="ChEBI" id="CHEBI:29105"/>
        <label>1</label>
    </ligand>
</feature>
<feature type="binding site" evidence="1">
    <location>
        <position position="195"/>
    </location>
    <ligand>
        <name>Zn(2+)</name>
        <dbReference type="ChEBI" id="CHEBI:29105"/>
        <label>1</label>
    </ligand>
</feature>
<feature type="binding site" evidence="1">
    <location>
        <position position="195"/>
    </location>
    <ligand>
        <name>Zn(2+)</name>
        <dbReference type="ChEBI" id="CHEBI:29105"/>
        <label>2</label>
        <note>catalytic</note>
    </ligand>
</feature>
<feature type="binding site" evidence="1">
    <location>
        <position position="234"/>
    </location>
    <ligand>
        <name>Zn(2+)</name>
        <dbReference type="ChEBI" id="CHEBI:29105"/>
        <label>2</label>
        <note>catalytic</note>
    </ligand>
</feature>
<feature type="binding site" evidence="1">
    <location>
        <position position="261"/>
    </location>
    <ligand>
        <name>Zn(2+)</name>
        <dbReference type="ChEBI" id="CHEBI:29105"/>
        <label>1</label>
    </ligand>
</feature>
<feature type="binding site" evidence="1">
    <location>
        <position position="343"/>
    </location>
    <ligand>
        <name>Zn(2+)</name>
        <dbReference type="ChEBI" id="CHEBI:29105"/>
        <label>2</label>
        <note>catalytic</note>
    </ligand>
</feature>
<feature type="glycosylation site" description="N-linked (GlcNAc...) asparagine" evidence="2">
    <location>
        <position position="87"/>
    </location>
</feature>
<feature type="glycosylation site" description="N-linked (GlcNAc...) asparagine" evidence="2">
    <location>
        <position position="288"/>
    </location>
</feature>
<feature type="disulfide bond" evidence="1">
    <location>
        <begin position="310"/>
        <end position="314"/>
    </location>
</feature>
<feature type="strand" evidence="6">
    <location>
        <begin position="29"/>
        <end position="34"/>
    </location>
</feature>
<feature type="strand" evidence="6">
    <location>
        <begin position="37"/>
        <end position="41"/>
    </location>
</feature>
<feature type="helix" evidence="6">
    <location>
        <begin position="43"/>
        <end position="51"/>
    </location>
</feature>
<feature type="helix" evidence="6">
    <location>
        <begin position="60"/>
        <end position="62"/>
    </location>
</feature>
<feature type="helix" evidence="6">
    <location>
        <begin position="87"/>
        <end position="94"/>
    </location>
</feature>
<feature type="helix" evidence="6">
    <location>
        <begin position="99"/>
        <end position="109"/>
    </location>
</feature>
<feature type="helix" evidence="6">
    <location>
        <begin position="120"/>
        <end position="140"/>
    </location>
</feature>
<feature type="strand" evidence="6">
    <location>
        <begin position="146"/>
        <end position="150"/>
    </location>
</feature>
<feature type="strand" evidence="6">
    <location>
        <begin position="153"/>
        <end position="155"/>
    </location>
</feature>
<feature type="strand" evidence="6">
    <location>
        <begin position="158"/>
        <end position="163"/>
    </location>
</feature>
<feature type="strand" evidence="6">
    <location>
        <begin position="166"/>
        <end position="168"/>
    </location>
</feature>
<feature type="strand" evidence="6">
    <location>
        <begin position="170"/>
        <end position="176"/>
    </location>
</feature>
<feature type="turn" evidence="6">
    <location>
        <begin position="185"/>
        <end position="187"/>
    </location>
</feature>
<feature type="turn" evidence="6">
    <location>
        <begin position="193"/>
        <end position="196"/>
    </location>
</feature>
<feature type="helix" evidence="6">
    <location>
        <begin position="197"/>
        <end position="210"/>
    </location>
</feature>
<feature type="helix" evidence="6">
    <location>
        <begin position="214"/>
        <end position="217"/>
    </location>
</feature>
<feature type="strand" evidence="6">
    <location>
        <begin position="221"/>
        <end position="231"/>
    </location>
</feature>
<feature type="helix" evidence="6">
    <location>
        <begin position="233"/>
        <end position="235"/>
    </location>
</feature>
<feature type="helix" evidence="6">
    <location>
        <begin position="238"/>
        <end position="249"/>
    </location>
</feature>
<feature type="strand" evidence="6">
    <location>
        <begin position="254"/>
        <end position="260"/>
    </location>
</feature>
<feature type="helix" evidence="6">
    <location>
        <begin position="267"/>
        <end position="271"/>
    </location>
</feature>
<feature type="strand" evidence="6">
    <location>
        <begin position="278"/>
        <end position="281"/>
    </location>
</feature>
<feature type="strand" evidence="6">
    <location>
        <begin position="283"/>
        <end position="285"/>
    </location>
</feature>
<feature type="helix" evidence="6">
    <location>
        <begin position="287"/>
        <end position="300"/>
    </location>
</feature>
<feature type="strand" evidence="6">
    <location>
        <begin position="305"/>
        <end position="308"/>
    </location>
</feature>
<feature type="helix" evidence="6">
    <location>
        <begin position="317"/>
        <end position="322"/>
    </location>
</feature>
<feature type="strand" evidence="6">
    <location>
        <begin position="327"/>
        <end position="334"/>
    </location>
</feature>
<feature type="helix" evidence="7">
    <location>
        <begin position="335"/>
        <end position="337"/>
    </location>
</feature>
<feature type="turn" evidence="6">
    <location>
        <begin position="340"/>
        <end position="343"/>
    </location>
</feature>
<feature type="helix" evidence="6">
    <location>
        <begin position="349"/>
        <end position="351"/>
    </location>
</feature>
<feature type="helix" evidence="6">
    <location>
        <begin position="354"/>
        <end position="372"/>
    </location>
</feature>
<organism>
    <name type="scientific">Aspergillus oryzae (strain ATCC 42149 / RIB 40)</name>
    <name type="common">Yellow koji mold</name>
    <dbReference type="NCBI Taxonomy" id="510516"/>
    <lineage>
        <taxon>Eukaryota</taxon>
        <taxon>Fungi</taxon>
        <taxon>Dikarya</taxon>
        <taxon>Ascomycota</taxon>
        <taxon>Pezizomycotina</taxon>
        <taxon>Eurotiomycetes</taxon>
        <taxon>Eurotiomycetidae</taxon>
        <taxon>Eurotiales</taxon>
        <taxon>Aspergillaceae</taxon>
        <taxon>Aspergillus</taxon>
        <taxon>Aspergillus subgen. Circumdati</taxon>
    </lineage>
</organism>
<sequence>MRFLPCIATLAATASALAIGDHVRSDDQYVLELAPGQTKVVTEAEKWALRAEGKRFFDITERASSLELASNKKQKLAVTYPDSVQHNETVQNLIKSLDKKNFETVLQPFSEFHNRYYKSDNGKKSSEWLQGKIQEIISASGAKGVTVEPFKHSFPQSSLIAKIPGKSDKTIVLGAHQDSINLDSPSEGRAPGADDDGSGVVTILEAFRVLLTDEKVAAGEAPNTVEFHFYAGEEGGLLGSQDIFEQYSQKSRDVKAMLQQDMTGYTKGTTDAGKPESIGIITDNVDENLTKFLKVIVDAYCTIPTVDSKCGYGCSDHASATKYGYPAAFAFESAFGDDSPYIHSADDTIETVNFDHVLQHGRLTLGFAYELAFADSL</sequence>